<name>C5AR1_GORGO</name>
<reference key="1">
    <citation type="submission" date="2011-05" db="EMBL/GenBank/DDBJ databases">
        <title>Insights into the evolution of the great apes provided by the gorilla genome.</title>
        <authorList>
            <person name="Scally A."/>
        </authorList>
    </citation>
    <scope>NUCLEOTIDE SEQUENCE [LARGE SCALE GENOMIC DNA]</scope>
</reference>
<reference key="2">
    <citation type="journal article" date="1996" name="Immunogenetics">
        <title>Molecular evolution of the N-formyl peptide and C5a receptors in non-human primates.</title>
        <authorList>
            <person name="Alvarez V."/>
            <person name="Coto E."/>
            <person name="Sehen F."/>
            <person name="Gouzalek-Koces S."/>
            <person name="Lopez-Larrea C."/>
        </authorList>
    </citation>
    <scope>NUCLEOTIDE SEQUENCE [GENOMIC DNA] OF 8-347</scope>
</reference>
<dbReference type="EMBL" id="X97733">
    <property type="protein sequence ID" value="CAA66317.1"/>
    <property type="molecule type" value="Genomic_DNA"/>
</dbReference>
<dbReference type="RefSeq" id="XP_004061097.1">
    <property type="nucleotide sequence ID" value="XM_004061049.2"/>
</dbReference>
<dbReference type="RefSeq" id="XP_055225810.1">
    <property type="nucleotide sequence ID" value="XM_055369835.1"/>
</dbReference>
<dbReference type="SMR" id="P79175"/>
<dbReference type="FunCoup" id="P79175">
    <property type="interactions" value="713"/>
</dbReference>
<dbReference type="STRING" id="9593.ENSGGOP00000038148"/>
<dbReference type="Ensembl" id="ENSGGOT00000008658.3">
    <property type="protein sequence ID" value="ENSGGOP00000008426.2"/>
    <property type="gene ID" value="ENSGGOG00000008622.3"/>
</dbReference>
<dbReference type="GeneID" id="129528589"/>
<dbReference type="eggNOG" id="ENOG502R35Z">
    <property type="taxonomic scope" value="Eukaryota"/>
</dbReference>
<dbReference type="GeneTree" id="ENSGT01130000278339"/>
<dbReference type="InParanoid" id="P79175"/>
<dbReference type="TreeFam" id="TF330976"/>
<dbReference type="Proteomes" id="UP000001519">
    <property type="component" value="Chromosome 19"/>
</dbReference>
<dbReference type="Bgee" id="ENSGGOG00000008622">
    <property type="expression patterns" value="Expressed in liver and 6 other cell types or tissues"/>
</dbReference>
<dbReference type="GO" id="GO:0045177">
    <property type="term" value="C:apical part of cell"/>
    <property type="evidence" value="ECO:0000250"/>
    <property type="project" value="UniProtKB"/>
</dbReference>
<dbReference type="GO" id="GO:0016323">
    <property type="term" value="C:basolateral plasma membrane"/>
    <property type="evidence" value="ECO:0000250"/>
    <property type="project" value="UniProtKB"/>
</dbReference>
<dbReference type="GO" id="GO:0031410">
    <property type="term" value="C:cytoplasmic vesicle"/>
    <property type="evidence" value="ECO:0007669"/>
    <property type="project" value="UniProtKB-KW"/>
</dbReference>
<dbReference type="GO" id="GO:0005886">
    <property type="term" value="C:plasma membrane"/>
    <property type="evidence" value="ECO:0000318"/>
    <property type="project" value="GO_Central"/>
</dbReference>
<dbReference type="GO" id="GO:0004878">
    <property type="term" value="F:complement component C5a receptor activity"/>
    <property type="evidence" value="ECO:0000250"/>
    <property type="project" value="UniProtKB"/>
</dbReference>
<dbReference type="GO" id="GO:0004930">
    <property type="term" value="F:G protein-coupled receptor activity"/>
    <property type="evidence" value="ECO:0000318"/>
    <property type="project" value="GO_Central"/>
</dbReference>
<dbReference type="GO" id="GO:0006935">
    <property type="term" value="P:chemotaxis"/>
    <property type="evidence" value="ECO:0007669"/>
    <property type="project" value="UniProtKB-KW"/>
</dbReference>
<dbReference type="GO" id="GO:0002430">
    <property type="term" value="P:complement receptor mediated signaling pathway"/>
    <property type="evidence" value="ECO:0000318"/>
    <property type="project" value="GO_Central"/>
</dbReference>
<dbReference type="GO" id="GO:0006954">
    <property type="term" value="P:inflammatory response"/>
    <property type="evidence" value="ECO:0000318"/>
    <property type="project" value="GO_Central"/>
</dbReference>
<dbReference type="GO" id="GO:0042789">
    <property type="term" value="P:mRNA transcription by RNA polymerase II"/>
    <property type="evidence" value="ECO:0000250"/>
    <property type="project" value="UniProtKB"/>
</dbReference>
<dbReference type="GO" id="GO:0007200">
    <property type="term" value="P:phospholipase C-activating G protein-coupled receptor signaling pathway"/>
    <property type="evidence" value="ECO:0000318"/>
    <property type="project" value="GO_Central"/>
</dbReference>
<dbReference type="GO" id="GO:0007204">
    <property type="term" value="P:positive regulation of cytosolic calcium ion concentration"/>
    <property type="evidence" value="ECO:0000318"/>
    <property type="project" value="GO_Central"/>
</dbReference>
<dbReference type="GO" id="GO:0050679">
    <property type="term" value="P:positive regulation of epithelial cell proliferation"/>
    <property type="evidence" value="ECO:0000250"/>
    <property type="project" value="UniProtKB"/>
</dbReference>
<dbReference type="GO" id="GO:0070374">
    <property type="term" value="P:positive regulation of ERK1 and ERK2 cascade"/>
    <property type="evidence" value="ECO:0000250"/>
    <property type="project" value="UniProtKB"/>
</dbReference>
<dbReference type="CDD" id="cd15114">
    <property type="entry name" value="7tmA_C5aR"/>
    <property type="match status" value="1"/>
</dbReference>
<dbReference type="FunFam" id="1.20.1070.10:FF:000034">
    <property type="entry name" value="G-protein coupled receptor 1"/>
    <property type="match status" value="1"/>
</dbReference>
<dbReference type="Gene3D" id="1.20.1070.10">
    <property type="entry name" value="Rhodopsin 7-helix transmembrane proteins"/>
    <property type="match status" value="1"/>
</dbReference>
<dbReference type="InterPro" id="IPR002234">
    <property type="entry name" value="Anphylx_rcpt_C3a/C5a1-2"/>
</dbReference>
<dbReference type="InterPro" id="IPR000826">
    <property type="entry name" value="Formyl_rcpt-rel"/>
</dbReference>
<dbReference type="InterPro" id="IPR000276">
    <property type="entry name" value="GPCR_Rhodpsn"/>
</dbReference>
<dbReference type="InterPro" id="IPR017452">
    <property type="entry name" value="GPCR_Rhodpsn_7TM"/>
</dbReference>
<dbReference type="PANTHER" id="PTHR24225:SF29">
    <property type="entry name" value="C5A ANAPHYLATOXIN CHEMOTACTIC RECEPTOR 1"/>
    <property type="match status" value="1"/>
</dbReference>
<dbReference type="PANTHER" id="PTHR24225">
    <property type="entry name" value="CHEMOTACTIC RECEPTOR"/>
    <property type="match status" value="1"/>
</dbReference>
<dbReference type="Pfam" id="PF00001">
    <property type="entry name" value="7tm_1"/>
    <property type="match status" value="1"/>
</dbReference>
<dbReference type="PRINTS" id="PR01104">
    <property type="entry name" value="ANPHYLATOXNR"/>
</dbReference>
<dbReference type="PRINTS" id="PR00426">
    <property type="entry name" value="C5ANPHYLTXNR"/>
</dbReference>
<dbReference type="PRINTS" id="PR00237">
    <property type="entry name" value="GPCRRHODOPSN"/>
</dbReference>
<dbReference type="SUPFAM" id="SSF81321">
    <property type="entry name" value="Family A G protein-coupled receptor-like"/>
    <property type="match status" value="1"/>
</dbReference>
<dbReference type="PROSITE" id="PS00237">
    <property type="entry name" value="G_PROTEIN_RECEP_F1_1"/>
    <property type="match status" value="1"/>
</dbReference>
<dbReference type="PROSITE" id="PS50262">
    <property type="entry name" value="G_PROTEIN_RECEP_F1_2"/>
    <property type="match status" value="1"/>
</dbReference>
<evidence type="ECO:0000250" key="1">
    <source>
        <dbReference type="UniProtKB" id="P21730"/>
    </source>
</evidence>
<evidence type="ECO:0000255" key="2">
    <source>
        <dbReference type="PROSITE-ProRule" id="PRU00521"/>
    </source>
</evidence>
<evidence type="ECO:0000305" key="3"/>
<organism>
    <name type="scientific">Gorilla gorilla gorilla</name>
    <name type="common">Western lowland gorilla</name>
    <dbReference type="NCBI Taxonomy" id="9595"/>
    <lineage>
        <taxon>Eukaryota</taxon>
        <taxon>Metazoa</taxon>
        <taxon>Chordata</taxon>
        <taxon>Craniata</taxon>
        <taxon>Vertebrata</taxon>
        <taxon>Euteleostomi</taxon>
        <taxon>Mammalia</taxon>
        <taxon>Eutheria</taxon>
        <taxon>Euarchontoglires</taxon>
        <taxon>Primates</taxon>
        <taxon>Haplorrhini</taxon>
        <taxon>Catarrhini</taxon>
        <taxon>Hominidae</taxon>
        <taxon>Gorilla</taxon>
    </lineage>
</organism>
<accession>P79175</accession>
<accession>G3QZV7</accession>
<gene>
    <name type="primary">C5AR1</name>
    <name type="synonym">C5AR</name>
    <name type="synonym">C5R1</name>
</gene>
<proteinExistence type="inferred from homology"/>
<protein>
    <recommendedName>
        <fullName>C5a anaphylatoxin chemotactic receptor 1</fullName>
    </recommendedName>
    <alternativeName>
        <fullName>C5a anaphylatoxin chemotactic receptor</fullName>
        <shortName>C5a-R</shortName>
        <shortName>C5aR</shortName>
    </alternativeName>
    <cdAntigenName>CD88</cdAntigenName>
</protein>
<sequence>MDSFNYTTPDYGHYDDKDTLDPNTPVDKTSNTLRVPDILALVIFAVVFLVGVLGNALVVWVTAFEVKRTINAIWFLNLAVADFLSCLALPILFTSIVQHHHWPFGGAACRILPSLILLNMYASILLLATISADRFLLVFKPIWCQNFRGAGLAWIACAVAWGLALLLTIPSFLYRVVREEYFPPKVLCGVDYSHDKQRERAVAVVRLVLGFLWPLLTLTICYTFILLRTWSRRATRSTKTLKVVVAVVASFFIFWLPYQVTGIMMSFLEPSSPTFLLLKKLDSLCVSFAYINCCINPIIYVVAGQGFQGRLRKSLPSLLRNVLTEESVVRESKSFTRSTVDTMAEKTQAV</sequence>
<keyword id="KW-1003">Cell membrane</keyword>
<keyword id="KW-0145">Chemotaxis</keyword>
<keyword id="KW-0968">Cytoplasmic vesicle</keyword>
<keyword id="KW-1015">Disulfide bond</keyword>
<keyword id="KW-0297">G-protein coupled receptor</keyword>
<keyword id="KW-0472">Membrane</keyword>
<keyword id="KW-0597">Phosphoprotein</keyword>
<keyword id="KW-0675">Receptor</keyword>
<keyword id="KW-1185">Reference proteome</keyword>
<keyword id="KW-0765">Sulfation</keyword>
<keyword id="KW-0807">Transducer</keyword>
<keyword id="KW-0812">Transmembrane</keyword>
<keyword id="KW-1133">Transmembrane helix</keyword>
<feature type="chain" id="PRO_0000069208" description="C5a anaphylatoxin chemotactic receptor 1" evidence="3">
    <location>
        <begin position="1"/>
        <end position="350"/>
    </location>
</feature>
<feature type="topological domain" description="Extracellular" evidence="3">
    <location>
        <begin position="1"/>
        <end position="37"/>
    </location>
</feature>
<feature type="transmembrane region" description="Helical; Name=1" evidence="1">
    <location>
        <begin position="38"/>
        <end position="64"/>
    </location>
</feature>
<feature type="topological domain" description="Cytoplasmic" evidence="3">
    <location>
        <begin position="65"/>
        <end position="69"/>
    </location>
</feature>
<feature type="transmembrane region" description="Helical; Name=2" evidence="1">
    <location>
        <begin position="70"/>
        <end position="93"/>
    </location>
</feature>
<feature type="topological domain" description="Extracellular" evidence="3">
    <location>
        <begin position="94"/>
        <end position="110"/>
    </location>
</feature>
<feature type="transmembrane region" description="Helical; Name=3" evidence="1">
    <location>
        <begin position="111"/>
        <end position="132"/>
    </location>
</feature>
<feature type="topological domain" description="Cytoplasmic" evidence="3">
    <location>
        <begin position="133"/>
        <end position="153"/>
    </location>
</feature>
<feature type="transmembrane region" description="Helical; Name=4" evidence="1">
    <location>
        <begin position="154"/>
        <end position="174"/>
    </location>
</feature>
<feature type="topological domain" description="Extracellular" evidence="3">
    <location>
        <begin position="175"/>
        <end position="200"/>
    </location>
</feature>
<feature type="transmembrane region" description="Helical; Name=5" evidence="1">
    <location>
        <begin position="201"/>
        <end position="226"/>
    </location>
</feature>
<feature type="topological domain" description="Cytoplasmic" evidence="3">
    <location>
        <begin position="227"/>
        <end position="242"/>
    </location>
</feature>
<feature type="transmembrane region" description="Helical; Name=6" evidence="1">
    <location>
        <begin position="243"/>
        <end position="265"/>
    </location>
</feature>
<feature type="topological domain" description="Extracellular" evidence="3">
    <location>
        <begin position="266"/>
        <end position="282"/>
    </location>
</feature>
<feature type="transmembrane region" description="Helical; Name=7" evidence="1">
    <location>
        <begin position="283"/>
        <end position="303"/>
    </location>
</feature>
<feature type="topological domain" description="Cytoplasmic" evidence="3">
    <location>
        <begin position="304"/>
        <end position="350"/>
    </location>
</feature>
<feature type="region of interest" description="Required for CHIPS binding" evidence="1">
    <location>
        <begin position="10"/>
        <end position="18"/>
    </location>
</feature>
<feature type="region of interest" description="Involved in C5a binding" evidence="1">
    <location>
        <begin position="21"/>
        <end position="30"/>
    </location>
</feature>
<feature type="modified residue" description="Sulfotyrosine" evidence="1">
    <location>
        <position position="11"/>
    </location>
</feature>
<feature type="modified residue" description="Sulfotyrosine" evidence="1">
    <location>
        <position position="14"/>
    </location>
</feature>
<feature type="modified residue" description="Phosphoserine" evidence="1">
    <location>
        <position position="314"/>
    </location>
</feature>
<feature type="modified residue" description="Phosphoserine" evidence="1">
    <location>
        <position position="317"/>
    </location>
</feature>
<feature type="modified residue" description="Phosphoserine" evidence="1">
    <location>
        <position position="327"/>
    </location>
</feature>
<feature type="modified residue" description="Phosphoserine" evidence="1">
    <location>
        <position position="332"/>
    </location>
</feature>
<feature type="modified residue" description="Phosphoserine" evidence="1">
    <location>
        <position position="334"/>
    </location>
</feature>
<feature type="modified residue" description="Phosphoserine" evidence="1">
    <location>
        <position position="338"/>
    </location>
</feature>
<feature type="disulfide bond" evidence="2">
    <location>
        <begin position="109"/>
        <end position="188"/>
    </location>
</feature>
<feature type="sequence conflict" description="In Ref. 2; CAA66317." evidence="3" ref="2">
    <original>L</original>
    <variation>M</variation>
    <location>
        <position position="57"/>
    </location>
</feature>
<feature type="sequence conflict" description="In Ref. 2; CAA66317." evidence="3" ref="2">
    <original>V</original>
    <variation>A</variation>
    <location>
        <position position="66"/>
    </location>
</feature>
<feature type="sequence conflict" description="In Ref. 2; CAA66317." evidence="3" ref="2">
    <original>Q</original>
    <variation>R</variation>
    <location>
        <position position="197"/>
    </location>
</feature>
<feature type="sequence conflict" description="In Ref. 2; CAA66317." evidence="3" ref="2">
    <original>V</original>
    <variation>I</variation>
    <location>
        <position position="204"/>
    </location>
</feature>
<feature type="sequence conflict" description="In Ref. 2; CAA66317." evidence="3" ref="2">
    <original>K</original>
    <variation>N</variation>
    <location>
        <position position="279"/>
    </location>
</feature>
<feature type="sequence conflict" description="In Ref. 2; CAA66317." evidence="3" ref="2">
    <original>E</original>
    <variation>Q</variation>
    <location>
        <position position="345"/>
    </location>
</feature>
<comment type="function">
    <text evidence="1">Receptor for the chemotactic and inflammatory peptide anaphylatoxin C5a. The ligand interacts with at least two sites on the receptor: a high-affinity site on the extracellular N-terminus, and a second site in the transmembrane region which activates downstream signaling events. Receptor activation stimulates chemotaxis, granule enzyme release, intracellular calcium release and superoxide anion production.</text>
</comment>
<comment type="subunit">
    <text evidence="1">Homodimer. May also form higher-order oligomers. Interacts (when phosphorylated) with ARRB1 and ARRB2; the interaction is associated with internalization of C5aR. Interacts (via N-terminal domain) with S.aureus chemotaxis inhibitory protein (CHIPS); the interaction blocks the receptor and may thus inhibit the immune response.</text>
</comment>
<comment type="subcellular location">
    <subcellularLocation>
        <location evidence="1">Cell membrane</location>
        <topology evidence="1">Multi-pass membrane protein</topology>
    </subcellularLocation>
    <subcellularLocation>
        <location evidence="1">Cytoplasmic vesicle</location>
    </subcellularLocation>
    <text evidence="1">Phosphorylated C5aR colocalizes with ARRB1 and ARRB2 in cytoplasmic vesicles.</text>
</comment>
<comment type="PTM">
    <text evidence="1">Sulfation plays a critical role in the association of C5aR with C5a, but no significant role in the ability of the receptor to transduce a signal and mobilize calcium in response to a small peptide agonist. Sulfation at Tyr-14 is important for CHIPS binding.</text>
</comment>
<comment type="PTM">
    <text evidence="1">Phosphorylated on serine residues in response to C5a binding, resulting in internalization of the receptor and short-term desensitization to C5a.</text>
</comment>
<comment type="similarity">
    <text evidence="2">Belongs to the G-protein coupled receptor 1 family.</text>
</comment>